<comment type="function">
    <text evidence="1">Part of the ABC transporter complex LolCDE involved in the translocation of mature outer membrane-directed lipoproteins, from the inner membrane to the periplasmic chaperone, LolA. Responsible for the formation of the LolA-lipoprotein complex in an ATP-dependent manner.</text>
</comment>
<comment type="subunit">
    <text evidence="1">The complex is composed of two ATP-binding proteins (LolD) and two transmembrane proteins (LolC and LolE).</text>
</comment>
<comment type="subcellular location">
    <subcellularLocation>
        <location evidence="1">Cell inner membrane</location>
        <topology evidence="1">Peripheral membrane protein</topology>
    </subcellularLocation>
</comment>
<comment type="similarity">
    <text evidence="1">Belongs to the ABC transporter superfamily. Lipoprotein translocase (TC 3.A.1.125) family.</text>
</comment>
<accession>Q8Y0C6</accession>
<sequence length="244" mass="26378">MSEAVMTANETTHRAEWGDTAVLQAQGLVKAFRQGGLNVDVLRGVDIRIGVGEKVAIVGASGSGKSTLLHVLGGLDVPTSGRVSLLGKPFTAMSERERNTLRNRALGFVYQFHHLLPEFTALDNVAMPLRIRGENEAQARHTAQAMLARVGLGERTAHRPGELSGGERQRVAIARALVGSPACVLADEPTGNLDDHTAGEVFDLMLELTRTLGTSFVIVTHDIDLAGRCDRILRLRDGHLHQER</sequence>
<proteinExistence type="inferred from homology"/>
<reference key="1">
    <citation type="journal article" date="2002" name="Nature">
        <title>Genome sequence of the plant pathogen Ralstonia solanacearum.</title>
        <authorList>
            <person name="Salanoubat M."/>
            <person name="Genin S."/>
            <person name="Artiguenave F."/>
            <person name="Gouzy J."/>
            <person name="Mangenot S."/>
            <person name="Arlat M."/>
            <person name="Billault A."/>
            <person name="Brottier P."/>
            <person name="Camus J.-C."/>
            <person name="Cattolico L."/>
            <person name="Chandler M."/>
            <person name="Choisne N."/>
            <person name="Claudel-Renard C."/>
            <person name="Cunnac S."/>
            <person name="Demange N."/>
            <person name="Gaspin C."/>
            <person name="Lavie M."/>
            <person name="Moisan A."/>
            <person name="Robert C."/>
            <person name="Saurin W."/>
            <person name="Schiex T."/>
            <person name="Siguier P."/>
            <person name="Thebault P."/>
            <person name="Whalen M."/>
            <person name="Wincker P."/>
            <person name="Levy M."/>
            <person name="Weissenbach J."/>
            <person name="Boucher C.A."/>
        </authorList>
    </citation>
    <scope>NUCLEOTIDE SEQUENCE [LARGE SCALE GENOMIC DNA]</scope>
    <source>
        <strain>ATCC BAA-1114 / GMI1000</strain>
    </source>
</reference>
<evidence type="ECO:0000255" key="1">
    <source>
        <dbReference type="HAMAP-Rule" id="MF_01708"/>
    </source>
</evidence>
<gene>
    <name evidence="1" type="primary">lolD</name>
    <name type="ordered locus">RSc1118</name>
    <name type="ORF">RS05758</name>
</gene>
<dbReference type="EC" id="7.6.2.-" evidence="1"/>
<dbReference type="EMBL" id="AL646052">
    <property type="protein sequence ID" value="CAD14820.1"/>
    <property type="molecule type" value="Genomic_DNA"/>
</dbReference>
<dbReference type="RefSeq" id="WP_011001068.1">
    <property type="nucleotide sequence ID" value="NC_003295.1"/>
</dbReference>
<dbReference type="SMR" id="Q8Y0C6"/>
<dbReference type="STRING" id="267608.RSc1118"/>
<dbReference type="EnsemblBacteria" id="CAD14820">
    <property type="protein sequence ID" value="CAD14820"/>
    <property type="gene ID" value="RSc1118"/>
</dbReference>
<dbReference type="KEGG" id="rso:RSc1118"/>
<dbReference type="eggNOG" id="COG1136">
    <property type="taxonomic scope" value="Bacteria"/>
</dbReference>
<dbReference type="HOGENOM" id="CLU_000604_1_22_4"/>
<dbReference type="Proteomes" id="UP000001436">
    <property type="component" value="Chromosome"/>
</dbReference>
<dbReference type="GO" id="GO:0005886">
    <property type="term" value="C:plasma membrane"/>
    <property type="evidence" value="ECO:0007669"/>
    <property type="project" value="UniProtKB-SubCell"/>
</dbReference>
<dbReference type="GO" id="GO:0005524">
    <property type="term" value="F:ATP binding"/>
    <property type="evidence" value="ECO:0007669"/>
    <property type="project" value="UniProtKB-KW"/>
</dbReference>
<dbReference type="GO" id="GO:0016887">
    <property type="term" value="F:ATP hydrolysis activity"/>
    <property type="evidence" value="ECO:0007669"/>
    <property type="project" value="InterPro"/>
</dbReference>
<dbReference type="GO" id="GO:0022857">
    <property type="term" value="F:transmembrane transporter activity"/>
    <property type="evidence" value="ECO:0007669"/>
    <property type="project" value="TreeGrafter"/>
</dbReference>
<dbReference type="GO" id="GO:0044874">
    <property type="term" value="P:lipoprotein localization to outer membrane"/>
    <property type="evidence" value="ECO:0007669"/>
    <property type="project" value="TreeGrafter"/>
</dbReference>
<dbReference type="GO" id="GO:0089705">
    <property type="term" value="P:protein localization to outer membrane"/>
    <property type="evidence" value="ECO:0007669"/>
    <property type="project" value="TreeGrafter"/>
</dbReference>
<dbReference type="CDD" id="cd03255">
    <property type="entry name" value="ABC_MJ0796_LolCDE_FtsE"/>
    <property type="match status" value="1"/>
</dbReference>
<dbReference type="FunFam" id="3.40.50.300:FF:000230">
    <property type="entry name" value="Lipoprotein-releasing system ATP-binding protein LolD"/>
    <property type="match status" value="1"/>
</dbReference>
<dbReference type="Gene3D" id="3.40.50.300">
    <property type="entry name" value="P-loop containing nucleotide triphosphate hydrolases"/>
    <property type="match status" value="1"/>
</dbReference>
<dbReference type="InterPro" id="IPR003593">
    <property type="entry name" value="AAA+_ATPase"/>
</dbReference>
<dbReference type="InterPro" id="IPR003439">
    <property type="entry name" value="ABC_transporter-like_ATP-bd"/>
</dbReference>
<dbReference type="InterPro" id="IPR017871">
    <property type="entry name" value="ABC_transporter-like_CS"/>
</dbReference>
<dbReference type="InterPro" id="IPR015854">
    <property type="entry name" value="ABC_transpr_LolD-like"/>
</dbReference>
<dbReference type="InterPro" id="IPR011924">
    <property type="entry name" value="LolD_lipo_ATP-bd"/>
</dbReference>
<dbReference type="InterPro" id="IPR017911">
    <property type="entry name" value="MacB-like_ATP-bd"/>
</dbReference>
<dbReference type="InterPro" id="IPR027417">
    <property type="entry name" value="P-loop_NTPase"/>
</dbReference>
<dbReference type="NCBIfam" id="TIGR02211">
    <property type="entry name" value="LolD_lipo_ex"/>
    <property type="match status" value="1"/>
</dbReference>
<dbReference type="PANTHER" id="PTHR24220">
    <property type="entry name" value="IMPORT ATP-BINDING PROTEIN"/>
    <property type="match status" value="1"/>
</dbReference>
<dbReference type="PANTHER" id="PTHR24220:SF689">
    <property type="entry name" value="LIPOPROTEIN-RELEASING SYSTEM ATP-BINDING PROTEIN LOLD"/>
    <property type="match status" value="1"/>
</dbReference>
<dbReference type="Pfam" id="PF00005">
    <property type="entry name" value="ABC_tran"/>
    <property type="match status" value="1"/>
</dbReference>
<dbReference type="SMART" id="SM00382">
    <property type="entry name" value="AAA"/>
    <property type="match status" value="1"/>
</dbReference>
<dbReference type="SUPFAM" id="SSF52540">
    <property type="entry name" value="P-loop containing nucleoside triphosphate hydrolases"/>
    <property type="match status" value="1"/>
</dbReference>
<dbReference type="PROSITE" id="PS00211">
    <property type="entry name" value="ABC_TRANSPORTER_1"/>
    <property type="match status" value="1"/>
</dbReference>
<dbReference type="PROSITE" id="PS50893">
    <property type="entry name" value="ABC_TRANSPORTER_2"/>
    <property type="match status" value="1"/>
</dbReference>
<dbReference type="PROSITE" id="PS51244">
    <property type="entry name" value="LOLD"/>
    <property type="match status" value="1"/>
</dbReference>
<name>LOLD_RALN1</name>
<protein>
    <recommendedName>
        <fullName evidence="1">Lipoprotein-releasing system ATP-binding protein LolD</fullName>
        <ecNumber evidence="1">7.6.2.-</ecNumber>
    </recommendedName>
</protein>
<feature type="chain" id="PRO_0000092451" description="Lipoprotein-releasing system ATP-binding protein LolD">
    <location>
        <begin position="1"/>
        <end position="244"/>
    </location>
</feature>
<feature type="domain" description="ABC transporter" evidence="1">
    <location>
        <begin position="23"/>
        <end position="244"/>
    </location>
</feature>
<feature type="binding site" evidence="1">
    <location>
        <begin position="59"/>
        <end position="66"/>
    </location>
    <ligand>
        <name>ATP</name>
        <dbReference type="ChEBI" id="CHEBI:30616"/>
    </ligand>
</feature>
<keyword id="KW-0067">ATP-binding</keyword>
<keyword id="KW-0997">Cell inner membrane</keyword>
<keyword id="KW-1003">Cell membrane</keyword>
<keyword id="KW-0472">Membrane</keyword>
<keyword id="KW-0547">Nucleotide-binding</keyword>
<keyword id="KW-1185">Reference proteome</keyword>
<keyword id="KW-1278">Translocase</keyword>
<keyword id="KW-0813">Transport</keyword>
<organism>
    <name type="scientific">Ralstonia nicotianae (strain ATCC BAA-1114 / GMI1000)</name>
    <name type="common">Ralstonia solanacearum</name>
    <dbReference type="NCBI Taxonomy" id="267608"/>
    <lineage>
        <taxon>Bacteria</taxon>
        <taxon>Pseudomonadati</taxon>
        <taxon>Pseudomonadota</taxon>
        <taxon>Betaproteobacteria</taxon>
        <taxon>Burkholderiales</taxon>
        <taxon>Burkholderiaceae</taxon>
        <taxon>Ralstonia</taxon>
        <taxon>Ralstonia solanacearum species complex</taxon>
    </lineage>
</organism>